<keyword id="KW-0030">Aminoacyl-tRNA synthetase</keyword>
<keyword id="KW-0067">ATP-binding</keyword>
<keyword id="KW-0963">Cytoplasm</keyword>
<keyword id="KW-0436">Ligase</keyword>
<keyword id="KW-0547">Nucleotide-binding</keyword>
<keyword id="KW-0648">Protein biosynthesis</keyword>
<keyword id="KW-1185">Reference proteome</keyword>
<dbReference type="EC" id="6.1.1.17" evidence="1"/>
<dbReference type="EMBL" id="AE005673">
    <property type="protein sequence ID" value="AAK23880.1"/>
    <property type="molecule type" value="Genomic_DNA"/>
</dbReference>
<dbReference type="PIR" id="D87485">
    <property type="entry name" value="D87485"/>
</dbReference>
<dbReference type="RefSeq" id="NP_420712.1">
    <property type="nucleotide sequence ID" value="NC_002696.2"/>
</dbReference>
<dbReference type="RefSeq" id="WP_010919771.1">
    <property type="nucleotide sequence ID" value="NC_002696.2"/>
</dbReference>
<dbReference type="SMR" id="Q9A721"/>
<dbReference type="STRING" id="190650.CC_1905"/>
<dbReference type="EnsemblBacteria" id="AAK23880">
    <property type="protein sequence ID" value="AAK23880"/>
    <property type="gene ID" value="CC_1905"/>
</dbReference>
<dbReference type="KEGG" id="ccr:CC_1905"/>
<dbReference type="PATRIC" id="fig|190650.5.peg.1922"/>
<dbReference type="eggNOG" id="COG0008">
    <property type="taxonomic scope" value="Bacteria"/>
</dbReference>
<dbReference type="HOGENOM" id="CLU_015768_6_0_5"/>
<dbReference type="BioCyc" id="CAULO:CC1905-MONOMER"/>
<dbReference type="Proteomes" id="UP000001816">
    <property type="component" value="Chromosome"/>
</dbReference>
<dbReference type="GO" id="GO:0005829">
    <property type="term" value="C:cytosol"/>
    <property type="evidence" value="ECO:0007669"/>
    <property type="project" value="TreeGrafter"/>
</dbReference>
<dbReference type="GO" id="GO:0005524">
    <property type="term" value="F:ATP binding"/>
    <property type="evidence" value="ECO:0007669"/>
    <property type="project" value="UniProtKB-UniRule"/>
</dbReference>
<dbReference type="GO" id="GO:0004818">
    <property type="term" value="F:glutamate-tRNA ligase activity"/>
    <property type="evidence" value="ECO:0007669"/>
    <property type="project" value="UniProtKB-UniRule"/>
</dbReference>
<dbReference type="GO" id="GO:0000049">
    <property type="term" value="F:tRNA binding"/>
    <property type="evidence" value="ECO:0007669"/>
    <property type="project" value="InterPro"/>
</dbReference>
<dbReference type="GO" id="GO:0008270">
    <property type="term" value="F:zinc ion binding"/>
    <property type="evidence" value="ECO:0007669"/>
    <property type="project" value="InterPro"/>
</dbReference>
<dbReference type="GO" id="GO:0006424">
    <property type="term" value="P:glutamyl-tRNA aminoacylation"/>
    <property type="evidence" value="ECO:0007669"/>
    <property type="project" value="UniProtKB-UniRule"/>
</dbReference>
<dbReference type="CDD" id="cd00808">
    <property type="entry name" value="GluRS_core"/>
    <property type="match status" value="1"/>
</dbReference>
<dbReference type="FunFam" id="3.40.50.620:FF:000007">
    <property type="entry name" value="Glutamate--tRNA ligase"/>
    <property type="match status" value="1"/>
</dbReference>
<dbReference type="Gene3D" id="1.10.10.350">
    <property type="match status" value="1"/>
</dbReference>
<dbReference type="Gene3D" id="3.40.50.620">
    <property type="entry name" value="HUPs"/>
    <property type="match status" value="1"/>
</dbReference>
<dbReference type="HAMAP" id="MF_00022">
    <property type="entry name" value="Glu_tRNA_synth_type1"/>
    <property type="match status" value="1"/>
</dbReference>
<dbReference type="InterPro" id="IPR045462">
    <property type="entry name" value="aa-tRNA-synth_I_cd-bd"/>
</dbReference>
<dbReference type="InterPro" id="IPR020751">
    <property type="entry name" value="aa-tRNA-synth_I_codon-bd_sub2"/>
</dbReference>
<dbReference type="InterPro" id="IPR001412">
    <property type="entry name" value="aa-tRNA-synth_I_CS"/>
</dbReference>
<dbReference type="InterPro" id="IPR008925">
    <property type="entry name" value="aa_tRNA-synth_I_cd-bd_sf"/>
</dbReference>
<dbReference type="InterPro" id="IPR004527">
    <property type="entry name" value="Glu-tRNA-ligase_bac/mito"/>
</dbReference>
<dbReference type="InterPro" id="IPR000924">
    <property type="entry name" value="Glu/Gln-tRNA-synth"/>
</dbReference>
<dbReference type="InterPro" id="IPR020058">
    <property type="entry name" value="Glu/Gln-tRNA-synth_Ib_cat-dom"/>
</dbReference>
<dbReference type="InterPro" id="IPR049940">
    <property type="entry name" value="GluQ/Sye"/>
</dbReference>
<dbReference type="InterPro" id="IPR033910">
    <property type="entry name" value="GluRS_core"/>
</dbReference>
<dbReference type="InterPro" id="IPR014729">
    <property type="entry name" value="Rossmann-like_a/b/a_fold"/>
</dbReference>
<dbReference type="NCBIfam" id="TIGR00464">
    <property type="entry name" value="gltX_bact"/>
    <property type="match status" value="1"/>
</dbReference>
<dbReference type="PANTHER" id="PTHR43311">
    <property type="entry name" value="GLUTAMATE--TRNA LIGASE"/>
    <property type="match status" value="1"/>
</dbReference>
<dbReference type="PANTHER" id="PTHR43311:SF2">
    <property type="entry name" value="GLUTAMATE--TRNA LIGASE, MITOCHONDRIAL-RELATED"/>
    <property type="match status" value="1"/>
</dbReference>
<dbReference type="Pfam" id="PF19269">
    <property type="entry name" value="Anticodon_2"/>
    <property type="match status" value="1"/>
</dbReference>
<dbReference type="Pfam" id="PF00749">
    <property type="entry name" value="tRNA-synt_1c"/>
    <property type="match status" value="1"/>
</dbReference>
<dbReference type="PRINTS" id="PR00987">
    <property type="entry name" value="TRNASYNTHGLU"/>
</dbReference>
<dbReference type="SUPFAM" id="SSF48163">
    <property type="entry name" value="An anticodon-binding domain of class I aminoacyl-tRNA synthetases"/>
    <property type="match status" value="1"/>
</dbReference>
<dbReference type="SUPFAM" id="SSF52374">
    <property type="entry name" value="Nucleotidylyl transferase"/>
    <property type="match status" value="1"/>
</dbReference>
<dbReference type="PROSITE" id="PS00178">
    <property type="entry name" value="AA_TRNA_LIGASE_I"/>
    <property type="match status" value="1"/>
</dbReference>
<feature type="chain" id="PRO_0000119536" description="Glutamate--tRNA ligase">
    <location>
        <begin position="1"/>
        <end position="470"/>
    </location>
</feature>
<feature type="short sequence motif" description="'HIGH' region" evidence="1">
    <location>
        <begin position="15"/>
        <end position="25"/>
    </location>
</feature>
<feature type="short sequence motif" description="'KMSKS' region" evidence="1">
    <location>
        <begin position="240"/>
        <end position="244"/>
    </location>
</feature>
<feature type="binding site" evidence="1">
    <location>
        <position position="243"/>
    </location>
    <ligand>
        <name>ATP</name>
        <dbReference type="ChEBI" id="CHEBI:30616"/>
    </ligand>
</feature>
<proteinExistence type="inferred from homology"/>
<gene>
    <name evidence="1" type="primary">gltX</name>
    <name type="ordered locus">CC_1905</name>
</gene>
<evidence type="ECO:0000255" key="1">
    <source>
        <dbReference type="HAMAP-Rule" id="MF_00022"/>
    </source>
</evidence>
<name>SYE_CAUVC</name>
<reference key="1">
    <citation type="journal article" date="2001" name="Proc. Natl. Acad. Sci. U.S.A.">
        <title>Complete genome sequence of Caulobacter crescentus.</title>
        <authorList>
            <person name="Nierman W.C."/>
            <person name="Feldblyum T.V."/>
            <person name="Laub M.T."/>
            <person name="Paulsen I.T."/>
            <person name="Nelson K.E."/>
            <person name="Eisen J.A."/>
            <person name="Heidelberg J.F."/>
            <person name="Alley M.R.K."/>
            <person name="Ohta N."/>
            <person name="Maddock J.R."/>
            <person name="Potocka I."/>
            <person name="Nelson W.C."/>
            <person name="Newton A."/>
            <person name="Stephens C."/>
            <person name="Phadke N.D."/>
            <person name="Ely B."/>
            <person name="DeBoy R.T."/>
            <person name="Dodson R.J."/>
            <person name="Durkin A.S."/>
            <person name="Gwinn M.L."/>
            <person name="Haft D.H."/>
            <person name="Kolonay J.F."/>
            <person name="Smit J."/>
            <person name="Craven M.B."/>
            <person name="Khouri H.M."/>
            <person name="Shetty J."/>
            <person name="Berry K.J."/>
            <person name="Utterback T.R."/>
            <person name="Tran K."/>
            <person name="Wolf A.M."/>
            <person name="Vamathevan J.J."/>
            <person name="Ermolaeva M.D."/>
            <person name="White O."/>
            <person name="Salzberg S.L."/>
            <person name="Venter J.C."/>
            <person name="Shapiro L."/>
            <person name="Fraser C.M."/>
        </authorList>
    </citation>
    <scope>NUCLEOTIDE SEQUENCE [LARGE SCALE GENOMIC DNA]</scope>
    <source>
        <strain>ATCC 19089 / CIP 103742 / CB 15</strain>
    </source>
</reference>
<sequence>MSNPTPTGVVTRFAPSPTGFLHIGGARTALFNWLYARHTGGKFLIRVEDTDRERSTEAAVAAIFEGLDWLGLKSDDEVIFQHTRAPRHVEVVHELLAKGRAYRCWMSIEELEVAREKARAEGRAIRSPWRDAPEGDLSAPHVIRFKGPLDGETLVNDLVKGPVTFKNIELDDLVLLRADGAPTYNLAVVVDDHDMGVTHVIRGDDHLNNAARQTLIYQAMDWAVPAFAHIPLIHGPDGAKLSKRHGAQAVGEFADLGYIPEGMRNYLARLGWGHGDDEVFTDEQAISWFDVADVVKAPARLDWAKLNHINAQHLRKADDARLTALALAAAETRGEPLPADAAERIARTVPEVKEGAKTILELVDHCAFALKTRPLALEEKTQKQLTEETVERLKRLRDQLAAAPDFDAATLETVLKSFAESEGVGFGKFGPALRGVLTGGAQAPDLNKTMAALSRDEAIGRLDDALAPRA</sequence>
<accession>Q9A721</accession>
<comment type="function">
    <text evidence="1">Catalyzes the attachment of glutamate to tRNA(Glu) in a two-step reaction: glutamate is first activated by ATP to form Glu-AMP and then transferred to the acceptor end of tRNA(Glu).</text>
</comment>
<comment type="catalytic activity">
    <reaction evidence="1">
        <text>tRNA(Glu) + L-glutamate + ATP = L-glutamyl-tRNA(Glu) + AMP + diphosphate</text>
        <dbReference type="Rhea" id="RHEA:23540"/>
        <dbReference type="Rhea" id="RHEA-COMP:9663"/>
        <dbReference type="Rhea" id="RHEA-COMP:9680"/>
        <dbReference type="ChEBI" id="CHEBI:29985"/>
        <dbReference type="ChEBI" id="CHEBI:30616"/>
        <dbReference type="ChEBI" id="CHEBI:33019"/>
        <dbReference type="ChEBI" id="CHEBI:78442"/>
        <dbReference type="ChEBI" id="CHEBI:78520"/>
        <dbReference type="ChEBI" id="CHEBI:456215"/>
        <dbReference type="EC" id="6.1.1.17"/>
    </reaction>
</comment>
<comment type="subunit">
    <text evidence="1">Monomer.</text>
</comment>
<comment type="subcellular location">
    <subcellularLocation>
        <location evidence="1">Cytoplasm</location>
    </subcellularLocation>
</comment>
<comment type="similarity">
    <text evidence="1">Belongs to the class-I aminoacyl-tRNA synthetase family. Glutamate--tRNA ligase type 1 subfamily.</text>
</comment>
<protein>
    <recommendedName>
        <fullName evidence="1">Glutamate--tRNA ligase</fullName>
        <ecNumber evidence="1">6.1.1.17</ecNumber>
    </recommendedName>
    <alternativeName>
        <fullName evidence="1">Glutamyl-tRNA synthetase</fullName>
        <shortName evidence="1">GluRS</shortName>
    </alternativeName>
</protein>
<organism>
    <name type="scientific">Caulobacter vibrioides (strain ATCC 19089 / CIP 103742 / CB 15)</name>
    <name type="common">Caulobacter crescentus</name>
    <dbReference type="NCBI Taxonomy" id="190650"/>
    <lineage>
        <taxon>Bacteria</taxon>
        <taxon>Pseudomonadati</taxon>
        <taxon>Pseudomonadota</taxon>
        <taxon>Alphaproteobacteria</taxon>
        <taxon>Caulobacterales</taxon>
        <taxon>Caulobacteraceae</taxon>
        <taxon>Caulobacter</taxon>
    </lineage>
</organism>